<keyword id="KW-0597">Phosphoprotein</keyword>
<keyword id="KW-1185">Reference proteome</keyword>
<name>ISOC1_BOVIN</name>
<comment type="similarity">
    <text evidence="3">Belongs to the isochorismatase family.</text>
</comment>
<accession>A6QLY4</accession>
<reference key="1">
    <citation type="submission" date="2007-06" db="EMBL/GenBank/DDBJ databases">
        <authorList>
            <consortium name="NIH - Mammalian Gene Collection (MGC) project"/>
        </authorList>
    </citation>
    <scope>NUCLEOTIDE SEQUENCE [LARGE SCALE MRNA]</scope>
    <source>
        <strain>Hereford</strain>
        <tissue>Fetal pons</tissue>
    </source>
</reference>
<organism>
    <name type="scientific">Bos taurus</name>
    <name type="common">Bovine</name>
    <dbReference type="NCBI Taxonomy" id="9913"/>
    <lineage>
        <taxon>Eukaryota</taxon>
        <taxon>Metazoa</taxon>
        <taxon>Chordata</taxon>
        <taxon>Craniata</taxon>
        <taxon>Vertebrata</taxon>
        <taxon>Euteleostomi</taxon>
        <taxon>Mammalia</taxon>
        <taxon>Eutheria</taxon>
        <taxon>Laurasiatheria</taxon>
        <taxon>Artiodactyla</taxon>
        <taxon>Ruminantia</taxon>
        <taxon>Pecora</taxon>
        <taxon>Bovidae</taxon>
        <taxon>Bovinae</taxon>
        <taxon>Bos</taxon>
    </lineage>
</organism>
<evidence type="ECO:0000250" key="1">
    <source>
        <dbReference type="UniProtKB" id="Q6I7R3"/>
    </source>
</evidence>
<evidence type="ECO:0000250" key="2">
    <source>
        <dbReference type="UniProtKB" id="Q91V64"/>
    </source>
</evidence>
<evidence type="ECO:0000305" key="3"/>
<feature type="chain" id="PRO_0000392201" description="Isochorismatase domain-containing protein 1">
    <location>
        <begin position="1"/>
        <end position="298"/>
    </location>
</feature>
<feature type="modified residue" description="Phosphotyrosine" evidence="1">
    <location>
        <position position="160"/>
    </location>
</feature>
<feature type="modified residue" description="N6-succinyllysine" evidence="2">
    <location>
        <position position="279"/>
    </location>
</feature>
<proteinExistence type="evidence at transcript level"/>
<gene>
    <name type="primary">ISOC1</name>
</gene>
<sequence length="298" mass="32116">MAAAEPAVPALPGGGGAGAGAPSGTVPVLFCFSVFARPAAVPHGAGYELLIQKFLSLYGDQIDMHRKFVVQLFAEEWGQYVDLPKGFAVSERCKVRLVPLQIQLTTLGNLTPSSTVFFCCDMQERFRPAIKYFGDIISVGQRLLQGARILGIPVIVTEQYPKGLGSTVQEIDLTGVKLVLPKTKFSMVLPEVEAALAEIPGVRSVVLFGVETHVCIQQTALELVGRGIEVHIVADATSSRSMMDRMFALERLARTGIIVTTSEAVLLQLVADKDHPKFKEIQNLIKASAPESGLLSKV</sequence>
<protein>
    <recommendedName>
        <fullName>Isochorismatase domain-containing protein 1</fullName>
    </recommendedName>
</protein>
<dbReference type="EMBL" id="BC148130">
    <property type="protein sequence ID" value="AAI48131.1"/>
    <property type="molecule type" value="mRNA"/>
</dbReference>
<dbReference type="RefSeq" id="NP_001094683.1">
    <property type="nucleotide sequence ID" value="NM_001101213.2"/>
</dbReference>
<dbReference type="SMR" id="A6QLY4"/>
<dbReference type="FunCoup" id="A6QLY4">
    <property type="interactions" value="1721"/>
</dbReference>
<dbReference type="STRING" id="9913.ENSBTAP00000035516"/>
<dbReference type="PaxDb" id="9913-ENSBTAP00000035516"/>
<dbReference type="PeptideAtlas" id="A6QLY4"/>
<dbReference type="GeneID" id="540524"/>
<dbReference type="KEGG" id="bta:540524"/>
<dbReference type="CTD" id="51015"/>
<dbReference type="VEuPathDB" id="HostDB:ENSBTAG00000000341"/>
<dbReference type="eggNOG" id="KOG4044">
    <property type="taxonomic scope" value="Eukaryota"/>
</dbReference>
<dbReference type="HOGENOM" id="CLU_047255_0_0_1"/>
<dbReference type="InParanoid" id="A6QLY4"/>
<dbReference type="OMA" id="QHACANI"/>
<dbReference type="OrthoDB" id="269496at2759"/>
<dbReference type="TreeFam" id="TF313459"/>
<dbReference type="Proteomes" id="UP000009136">
    <property type="component" value="Chromosome 7"/>
</dbReference>
<dbReference type="Bgee" id="ENSBTAG00000000341">
    <property type="expression patterns" value="Expressed in uterine horn and 107 other cell types or tissues"/>
</dbReference>
<dbReference type="GO" id="GO:0005737">
    <property type="term" value="C:cytoplasm"/>
    <property type="evidence" value="ECO:0000318"/>
    <property type="project" value="GO_Central"/>
</dbReference>
<dbReference type="CDD" id="cd01012">
    <property type="entry name" value="YcaC_related"/>
    <property type="match status" value="1"/>
</dbReference>
<dbReference type="FunFam" id="3.40.50.850:FF:000001">
    <property type="entry name" value="Isochorismatase domain-containing protein 1"/>
    <property type="match status" value="1"/>
</dbReference>
<dbReference type="Gene3D" id="3.40.50.850">
    <property type="entry name" value="Isochorismatase-like"/>
    <property type="match status" value="1"/>
</dbReference>
<dbReference type="InterPro" id="IPR000868">
    <property type="entry name" value="Isochorismatase-like_dom"/>
</dbReference>
<dbReference type="InterPro" id="IPR036380">
    <property type="entry name" value="Isochorismatase-like_sf"/>
</dbReference>
<dbReference type="InterPro" id="IPR050993">
    <property type="entry name" value="Isochorismatase_domain"/>
</dbReference>
<dbReference type="PANTHER" id="PTHR14119">
    <property type="entry name" value="HYDROLASE"/>
    <property type="match status" value="1"/>
</dbReference>
<dbReference type="PANTHER" id="PTHR14119:SF17">
    <property type="entry name" value="ISOCHORISMATASE DOMAIN-CONTAINING PROTEIN 1"/>
    <property type="match status" value="1"/>
</dbReference>
<dbReference type="Pfam" id="PF00857">
    <property type="entry name" value="Isochorismatase"/>
    <property type="match status" value="1"/>
</dbReference>
<dbReference type="SUPFAM" id="SSF52499">
    <property type="entry name" value="Isochorismatase-like hydrolases"/>
    <property type="match status" value="1"/>
</dbReference>